<sequence length="472" mass="49646">MDWDLKMPVSWDLAELEHNAVPNMAAAASAAEPGIAAVAASRGAPGRPECSVDLKLGGLGEFGAADALKEPAAAAKAPVSSAAAAASVAKVPPSTSTLKRPRGGGGGGGGQCPSCAVDGCKADLSKHRDYHRRHKVCEPHSKTPVVVVSGREMRFCQQCSRFHLLGEFDEAKRSCRKRLDGHNRRRRKPQADSMSSGSFMTSQQGTRFASFTPPRPEPSWPGIIKSEETPYYSHHHHPHPVMTSRQPHFVGSPSSATTAAFSPKEGRRFPFLHEGDQISFGGGGGAAAAATLEISVCQTTVVAPPPPESSSSNKMFSSDGLTTATTTTTTAHHHHHHHQVLDSDCALSLLSSPANSSSVDVSRMVQPSPAAAAGAEHHHHHQIPMAQPLVPNLQQQFGGSSPWFASSPAAAAVAGGGFACPSMDSEQQQQQQLNAVLVPGSNENEMNYHGMFHVGGEGSSDGTSPSLPFSWQ</sequence>
<evidence type="ECO:0000250" key="1"/>
<evidence type="ECO:0000255" key="2"/>
<evidence type="ECO:0000255" key="3">
    <source>
        <dbReference type="PROSITE-ProRule" id="PRU00470"/>
    </source>
</evidence>
<evidence type="ECO:0000256" key="4">
    <source>
        <dbReference type="SAM" id="MobiDB-lite"/>
    </source>
</evidence>
<evidence type="ECO:0000269" key="5">
    <source>
    </source>
</evidence>
<evidence type="ECO:0000305" key="6"/>
<evidence type="ECO:0000305" key="7">
    <source>
    </source>
</evidence>
<dbReference type="EMBL" id="AP008215">
    <property type="protein sequence ID" value="BAF25526.1"/>
    <property type="molecule type" value="Genomic_DNA"/>
</dbReference>
<dbReference type="EMBL" id="AP014965">
    <property type="protein sequence ID" value="BAT08871.1"/>
    <property type="molecule type" value="Genomic_DNA"/>
</dbReference>
<dbReference type="SMR" id="Q0J0K1"/>
<dbReference type="FunCoup" id="Q0J0K1">
    <property type="interactions" value="1680"/>
</dbReference>
<dbReference type="STRING" id="39947.Q0J0K1"/>
<dbReference type="PaxDb" id="39947-Q0J0K1"/>
<dbReference type="EnsemblPlants" id="Os09t0507100-01">
    <property type="protein sequence ID" value="Os09t0507100-01"/>
    <property type="gene ID" value="Os09g0507100"/>
</dbReference>
<dbReference type="GeneID" id="4347516"/>
<dbReference type="Gramene" id="Os09t0507100-01">
    <property type="protein sequence ID" value="Os09t0507100-01"/>
    <property type="gene ID" value="Os09g0507100"/>
</dbReference>
<dbReference type="KEGG" id="dosa:Os09g0507100"/>
<dbReference type="KEGG" id="osa:4347516"/>
<dbReference type="eggNOG" id="ENOG502QRGA">
    <property type="taxonomic scope" value="Eukaryota"/>
</dbReference>
<dbReference type="HOGENOM" id="CLU_042475_0_1_1"/>
<dbReference type="InParanoid" id="Q0J0K1"/>
<dbReference type="OMA" id="SECREYH"/>
<dbReference type="OrthoDB" id="514967at2759"/>
<dbReference type="Proteomes" id="UP000000763">
    <property type="component" value="Chromosome 9"/>
</dbReference>
<dbReference type="Proteomes" id="UP000059680">
    <property type="component" value="Chromosome 9"/>
</dbReference>
<dbReference type="GO" id="GO:0005634">
    <property type="term" value="C:nucleus"/>
    <property type="evidence" value="ECO:0007669"/>
    <property type="project" value="UniProtKB-SubCell"/>
</dbReference>
<dbReference type="GO" id="GO:0003677">
    <property type="term" value="F:DNA binding"/>
    <property type="evidence" value="ECO:0007669"/>
    <property type="project" value="UniProtKB-KW"/>
</dbReference>
<dbReference type="GO" id="GO:0008270">
    <property type="term" value="F:zinc ion binding"/>
    <property type="evidence" value="ECO:0007669"/>
    <property type="project" value="UniProtKB-KW"/>
</dbReference>
<dbReference type="FunFam" id="4.10.1100.10:FF:000001">
    <property type="entry name" value="Squamosa promoter-binding-like protein 14"/>
    <property type="match status" value="1"/>
</dbReference>
<dbReference type="Gene3D" id="4.10.1100.10">
    <property type="entry name" value="Transcription factor, SBP-box domain"/>
    <property type="match status" value="1"/>
</dbReference>
<dbReference type="InterPro" id="IPR044817">
    <property type="entry name" value="SBP-like"/>
</dbReference>
<dbReference type="InterPro" id="IPR004333">
    <property type="entry name" value="SBP_dom"/>
</dbReference>
<dbReference type="InterPro" id="IPR036893">
    <property type="entry name" value="SBP_sf"/>
</dbReference>
<dbReference type="PANTHER" id="PTHR31251:SF208">
    <property type="entry name" value="SQUAMOSA PROMOTER-BINDING-LIKE PROTEIN 18"/>
    <property type="match status" value="1"/>
</dbReference>
<dbReference type="PANTHER" id="PTHR31251">
    <property type="entry name" value="SQUAMOSA PROMOTER-BINDING-LIKE PROTEIN 4"/>
    <property type="match status" value="1"/>
</dbReference>
<dbReference type="Pfam" id="PF03110">
    <property type="entry name" value="SBP"/>
    <property type="match status" value="1"/>
</dbReference>
<dbReference type="SUPFAM" id="SSF103612">
    <property type="entry name" value="SBT domain"/>
    <property type="match status" value="1"/>
</dbReference>
<dbReference type="PROSITE" id="PS51141">
    <property type="entry name" value="ZF_SBP"/>
    <property type="match status" value="1"/>
</dbReference>
<accession>Q0J0K1</accession>
<accession>A0A0P0XP37</accession>
<comment type="function">
    <text evidence="1">Trans-acting factor that binds specifically to the consensus nucleotide sequence 5'-TNCGTACAA-3' (By similarity). May be involved in panicle development.</text>
</comment>
<comment type="subcellular location">
    <subcellularLocation>
        <location evidence="6">Nucleus</location>
    </subcellularLocation>
</comment>
<comment type="tissue specificity">
    <text evidence="5">Expressed in young panicles.</text>
</comment>
<comment type="induction">
    <text evidence="7">Negatively regulated by microRNAs miR156b and miR156h.</text>
</comment>
<comment type="domain">
    <text evidence="1">The SBP-type zinc finger is required for the binding to DNA.</text>
</comment>
<keyword id="KW-0238">DNA-binding</keyword>
<keyword id="KW-0479">Metal-binding</keyword>
<keyword id="KW-0539">Nucleus</keyword>
<keyword id="KW-1185">Reference proteome</keyword>
<keyword id="KW-0804">Transcription</keyword>
<keyword id="KW-0805">Transcription regulation</keyword>
<keyword id="KW-0862">Zinc</keyword>
<keyword id="KW-0863">Zinc-finger</keyword>
<organism>
    <name type="scientific">Oryza sativa subsp. japonica</name>
    <name type="common">Rice</name>
    <dbReference type="NCBI Taxonomy" id="39947"/>
    <lineage>
        <taxon>Eukaryota</taxon>
        <taxon>Viridiplantae</taxon>
        <taxon>Streptophyta</taxon>
        <taxon>Embryophyta</taxon>
        <taxon>Tracheophyta</taxon>
        <taxon>Spermatophyta</taxon>
        <taxon>Magnoliopsida</taxon>
        <taxon>Liliopsida</taxon>
        <taxon>Poales</taxon>
        <taxon>Poaceae</taxon>
        <taxon>BOP clade</taxon>
        <taxon>Oryzoideae</taxon>
        <taxon>Oryzeae</taxon>
        <taxon>Oryzinae</taxon>
        <taxon>Oryza</taxon>
        <taxon>Oryza sativa</taxon>
    </lineage>
</organism>
<protein>
    <recommendedName>
        <fullName>Squamosa promoter-binding-like protein 18</fullName>
    </recommendedName>
</protein>
<name>SPL18_ORYSJ</name>
<gene>
    <name type="primary">SPL18</name>
    <name type="ordered locus">Os09g0507100</name>
    <name type="ordered locus">LOC_Os09g32944</name>
</gene>
<feature type="chain" id="PRO_0000308246" description="Squamosa promoter-binding-like protein 18">
    <location>
        <begin position="1"/>
        <end position="472"/>
    </location>
</feature>
<feature type="zinc finger region" description="SBP-type" evidence="3">
    <location>
        <begin position="112"/>
        <end position="189"/>
    </location>
</feature>
<feature type="region of interest" description="Disordered" evidence="4">
    <location>
        <begin position="89"/>
        <end position="110"/>
    </location>
</feature>
<feature type="region of interest" description="Disordered" evidence="4">
    <location>
        <begin position="179"/>
        <end position="218"/>
    </location>
</feature>
<feature type="region of interest" description="Disordered" evidence="4">
    <location>
        <begin position="233"/>
        <end position="261"/>
    </location>
</feature>
<feature type="region of interest" description="Disordered" evidence="4">
    <location>
        <begin position="358"/>
        <end position="381"/>
    </location>
</feature>
<feature type="short sequence motif" description="Bipartite nuclear localization signal" evidence="2">
    <location>
        <begin position="172"/>
        <end position="188"/>
    </location>
</feature>
<feature type="compositionally biased region" description="Polar residues" evidence="4">
    <location>
        <begin position="192"/>
        <end position="209"/>
    </location>
</feature>
<feature type="compositionally biased region" description="Low complexity" evidence="4">
    <location>
        <begin position="252"/>
        <end position="261"/>
    </location>
</feature>
<feature type="binding site" evidence="3">
    <location>
        <position position="115"/>
    </location>
    <ligand>
        <name>Zn(2+)</name>
        <dbReference type="ChEBI" id="CHEBI:29105"/>
        <label>1</label>
    </ligand>
</feature>
<feature type="binding site" evidence="3">
    <location>
        <position position="120"/>
    </location>
    <ligand>
        <name>Zn(2+)</name>
        <dbReference type="ChEBI" id="CHEBI:29105"/>
        <label>1</label>
    </ligand>
</feature>
<feature type="binding site" evidence="3">
    <location>
        <position position="137"/>
    </location>
    <ligand>
        <name>Zn(2+)</name>
        <dbReference type="ChEBI" id="CHEBI:29105"/>
        <label>1</label>
    </ligand>
</feature>
<feature type="binding site" evidence="3">
    <location>
        <position position="140"/>
    </location>
    <ligand>
        <name>Zn(2+)</name>
        <dbReference type="ChEBI" id="CHEBI:29105"/>
        <label>1</label>
    </ligand>
</feature>
<feature type="binding site" evidence="3">
    <location>
        <position position="156"/>
    </location>
    <ligand>
        <name>Zn(2+)</name>
        <dbReference type="ChEBI" id="CHEBI:29105"/>
        <label>2</label>
    </ligand>
</feature>
<feature type="binding site" evidence="3">
    <location>
        <position position="159"/>
    </location>
    <ligand>
        <name>Zn(2+)</name>
        <dbReference type="ChEBI" id="CHEBI:29105"/>
        <label>2</label>
    </ligand>
</feature>
<feature type="binding site" evidence="3">
    <location>
        <position position="163"/>
    </location>
    <ligand>
        <name>Zn(2+)</name>
        <dbReference type="ChEBI" id="CHEBI:29105"/>
        <label>2</label>
    </ligand>
</feature>
<feature type="binding site" evidence="3">
    <location>
        <position position="175"/>
    </location>
    <ligand>
        <name>Zn(2+)</name>
        <dbReference type="ChEBI" id="CHEBI:29105"/>
        <label>2</label>
    </ligand>
</feature>
<proteinExistence type="evidence at transcript level"/>
<reference key="1">
    <citation type="journal article" date="2005" name="Nature">
        <title>The map-based sequence of the rice genome.</title>
        <authorList>
            <consortium name="International rice genome sequencing project (IRGSP)"/>
        </authorList>
    </citation>
    <scope>NUCLEOTIDE SEQUENCE [LARGE SCALE GENOMIC DNA]</scope>
    <source>
        <strain>cv. Nipponbare</strain>
    </source>
</reference>
<reference key="2">
    <citation type="journal article" date="2008" name="Nucleic Acids Res.">
        <title>The rice annotation project database (RAP-DB): 2008 update.</title>
        <authorList>
            <consortium name="The rice annotation project (RAP)"/>
        </authorList>
    </citation>
    <scope>GENOME REANNOTATION</scope>
    <source>
        <strain>cv. Nipponbare</strain>
    </source>
</reference>
<reference key="3">
    <citation type="journal article" date="2013" name="Rice">
        <title>Improvement of the Oryza sativa Nipponbare reference genome using next generation sequence and optical map data.</title>
        <authorList>
            <person name="Kawahara Y."/>
            <person name="de la Bastide M."/>
            <person name="Hamilton J.P."/>
            <person name="Kanamori H."/>
            <person name="McCombie W.R."/>
            <person name="Ouyang S."/>
            <person name="Schwartz D.C."/>
            <person name="Tanaka T."/>
            <person name="Wu J."/>
            <person name="Zhou S."/>
            <person name="Childs K.L."/>
            <person name="Davidson R.M."/>
            <person name="Lin H."/>
            <person name="Quesada-Ocampo L."/>
            <person name="Vaillancourt B."/>
            <person name="Sakai H."/>
            <person name="Lee S.S."/>
            <person name="Kim J."/>
            <person name="Numa H."/>
            <person name="Itoh T."/>
            <person name="Buell C.R."/>
            <person name="Matsumoto T."/>
        </authorList>
    </citation>
    <scope>GENOME REANNOTATION</scope>
    <source>
        <strain>cv. Nipponbare</strain>
    </source>
</reference>
<reference key="4">
    <citation type="journal article" date="2006" name="Plant Physiol.">
        <title>Genomic organization, differential expression, and interaction of SQUAMOSA promoter-binding-like transcription factors and microRNA156 in rice.</title>
        <authorList>
            <person name="Xie K."/>
            <person name="Wu C."/>
            <person name="Xiong L."/>
        </authorList>
    </citation>
    <scope>TISSUE SPECIFICITY</scope>
    <scope>INDUCTION</scope>
    <scope>GENE FAMILY</scope>
    <scope>NOMENCLATURE</scope>
</reference>
<reference key="5">
    <citation type="journal article" date="2008" name="Gene">
        <title>Comparative study of SBP-box gene family in Arabidopsis and rice.</title>
        <authorList>
            <person name="Yang Z."/>
            <person name="Wang X."/>
            <person name="Gu S."/>
            <person name="Hu Z."/>
            <person name="Xu H."/>
            <person name="Xu C."/>
        </authorList>
    </citation>
    <scope>GENE FAMILY</scope>
</reference>